<dbReference type="EMBL" id="DS499602">
    <property type="protein sequence ID" value="EDP47527.1"/>
    <property type="molecule type" value="Genomic_DNA"/>
</dbReference>
<dbReference type="SMR" id="B0YCZ3"/>
<dbReference type="EnsemblFungi" id="EDP47527">
    <property type="protein sequence ID" value="EDP47527"/>
    <property type="gene ID" value="AFUB_093710"/>
</dbReference>
<dbReference type="VEuPathDB" id="FungiDB:AFUB_093710"/>
<dbReference type="HOGENOM" id="CLU_048802_0_0_1"/>
<dbReference type="OrthoDB" id="125916at5052"/>
<dbReference type="PhylomeDB" id="B0YCZ3"/>
<dbReference type="Proteomes" id="UP000001699">
    <property type="component" value="Unassembled WGS sequence"/>
</dbReference>
<dbReference type="GO" id="GO:0030686">
    <property type="term" value="C:90S preribosome"/>
    <property type="evidence" value="ECO:0007669"/>
    <property type="project" value="TreeGrafter"/>
</dbReference>
<dbReference type="GO" id="GO:0005730">
    <property type="term" value="C:nucleolus"/>
    <property type="evidence" value="ECO:0007669"/>
    <property type="project" value="UniProtKB-SubCell"/>
</dbReference>
<dbReference type="GO" id="GO:0000462">
    <property type="term" value="P:maturation of SSU-rRNA from tricistronic rRNA transcript (SSU-rRNA, 5.8S rRNA, LSU-rRNA)"/>
    <property type="evidence" value="ECO:0007669"/>
    <property type="project" value="TreeGrafter"/>
</dbReference>
<dbReference type="InterPro" id="IPR009292">
    <property type="entry name" value="RRP36"/>
</dbReference>
<dbReference type="PANTHER" id="PTHR21738">
    <property type="entry name" value="RIBOSOMAL RNA PROCESSING PROTEIN 36 HOMOLOG"/>
    <property type="match status" value="1"/>
</dbReference>
<dbReference type="PANTHER" id="PTHR21738:SF0">
    <property type="entry name" value="RIBOSOMAL RNA PROCESSING PROTEIN 36 HOMOLOG"/>
    <property type="match status" value="1"/>
</dbReference>
<dbReference type="Pfam" id="PF06102">
    <property type="entry name" value="RRP36"/>
    <property type="match status" value="1"/>
</dbReference>
<reference key="1">
    <citation type="journal article" date="2008" name="PLoS Genet.">
        <title>Genomic islands in the pathogenic filamentous fungus Aspergillus fumigatus.</title>
        <authorList>
            <person name="Fedorova N.D."/>
            <person name="Khaldi N."/>
            <person name="Joardar V.S."/>
            <person name="Maiti R."/>
            <person name="Amedeo P."/>
            <person name="Anderson M.J."/>
            <person name="Crabtree J."/>
            <person name="Silva J.C."/>
            <person name="Badger J.H."/>
            <person name="Albarraq A."/>
            <person name="Angiuoli S."/>
            <person name="Bussey H."/>
            <person name="Bowyer P."/>
            <person name="Cotty P.J."/>
            <person name="Dyer P.S."/>
            <person name="Egan A."/>
            <person name="Galens K."/>
            <person name="Fraser-Liggett C.M."/>
            <person name="Haas B.J."/>
            <person name="Inman J.M."/>
            <person name="Kent R."/>
            <person name="Lemieux S."/>
            <person name="Malavazi I."/>
            <person name="Orvis J."/>
            <person name="Roemer T."/>
            <person name="Ronning C.M."/>
            <person name="Sundaram J.P."/>
            <person name="Sutton G."/>
            <person name="Turner G."/>
            <person name="Venter J.C."/>
            <person name="White O.R."/>
            <person name="Whitty B.R."/>
            <person name="Youngman P."/>
            <person name="Wolfe K.H."/>
            <person name="Goldman G.H."/>
            <person name="Wortman J.R."/>
            <person name="Jiang B."/>
            <person name="Denning D.W."/>
            <person name="Nierman W.C."/>
        </authorList>
    </citation>
    <scope>NUCLEOTIDE SEQUENCE [LARGE SCALE GENOMIC DNA]</scope>
    <source>
        <strain>CBS 144.89 / FGSC A1163 / CEA10</strain>
    </source>
</reference>
<evidence type="ECO:0000250" key="1"/>
<evidence type="ECO:0000255" key="2"/>
<evidence type="ECO:0000256" key="3">
    <source>
        <dbReference type="SAM" id="MobiDB-lite"/>
    </source>
</evidence>
<evidence type="ECO:0000305" key="4"/>
<organism>
    <name type="scientific">Aspergillus fumigatus (strain CBS 144.89 / FGSC A1163 / CEA10)</name>
    <name type="common">Neosartorya fumigata</name>
    <dbReference type="NCBI Taxonomy" id="451804"/>
    <lineage>
        <taxon>Eukaryota</taxon>
        <taxon>Fungi</taxon>
        <taxon>Dikarya</taxon>
        <taxon>Ascomycota</taxon>
        <taxon>Pezizomycotina</taxon>
        <taxon>Eurotiomycetes</taxon>
        <taxon>Eurotiomycetidae</taxon>
        <taxon>Eurotiales</taxon>
        <taxon>Aspergillaceae</taxon>
        <taxon>Aspergillus</taxon>
        <taxon>Aspergillus subgen. Fumigati</taxon>
    </lineage>
</organism>
<comment type="function">
    <text evidence="1">Component of the 90S pre-ribosome involved in the maturation of rRNAs. Required for early cleavages of the pre-RNAs in the 40S ribosomal subunit maturation pathway (By similarity).</text>
</comment>
<comment type="subunit">
    <text evidence="1">Associates with 90S and pre-40S pre-ribosomal particles.</text>
</comment>
<comment type="subcellular location">
    <subcellularLocation>
        <location evidence="1">Nucleus</location>
        <location evidence="1">Nucleolus</location>
    </subcellularLocation>
</comment>
<comment type="similarity">
    <text evidence="4">Belongs to the RRP36 family.</text>
</comment>
<name>RRP36_ASPFC</name>
<keyword id="KW-0175">Coiled coil</keyword>
<keyword id="KW-0539">Nucleus</keyword>
<keyword id="KW-0687">Ribonucleoprotein</keyword>
<keyword id="KW-0690">Ribosome biogenesis</keyword>
<keyword id="KW-0698">rRNA processing</keyword>
<sequence>MAVSDLLNRRVRALPDEDEELYSEASVSELESNDEEVEGSGSDISDDSSEGDYSSDSQDESDAMSHENEEEDDEDDENSDDGQDDVQASLSNISFGALAKAQASLGPTAKRKSKATQSKTDDGETPAASPLDDIRARIREAREQKREGSSKSKDLEKFSRSSKHAPMVQSSKHPVTRKRTIIEPPAALKSRDPRFDPAVRSQSGRSEASQSAYAFLDDYRAAELKEMKEKLAKTKDPRQKEALKRDIRSATDRLRTIENRRREKEVLAEHKKREKELIREGKKSTPYFLKKSELKKQALLKKYESMGSRQRVKALERRQKKLTAKERKEMPMERRGLGNDPTPYNDGGGGKRRRLA</sequence>
<proteinExistence type="inferred from homology"/>
<protein>
    <recommendedName>
        <fullName>rRNA biogenesis protein rrp36</fullName>
    </recommendedName>
    <alternativeName>
        <fullName>Ribosomal RNA-processing protein 36</fullName>
    </alternativeName>
</protein>
<feature type="chain" id="PRO_0000397617" description="rRNA biogenesis protein rrp36">
    <location>
        <begin position="1"/>
        <end position="356"/>
    </location>
</feature>
<feature type="region of interest" description="Disordered" evidence="3">
    <location>
        <begin position="14"/>
        <end position="209"/>
    </location>
</feature>
<feature type="region of interest" description="Disordered" evidence="3">
    <location>
        <begin position="305"/>
        <end position="356"/>
    </location>
</feature>
<feature type="coiled-coil region" evidence="2">
    <location>
        <begin position="238"/>
        <end position="280"/>
    </location>
</feature>
<feature type="compositionally biased region" description="Acidic residues" evidence="3">
    <location>
        <begin position="31"/>
        <end position="50"/>
    </location>
</feature>
<feature type="compositionally biased region" description="Acidic residues" evidence="3">
    <location>
        <begin position="57"/>
        <end position="84"/>
    </location>
</feature>
<feature type="compositionally biased region" description="Basic and acidic residues" evidence="3">
    <location>
        <begin position="132"/>
        <end position="159"/>
    </location>
</feature>
<feature type="compositionally biased region" description="Polar residues" evidence="3">
    <location>
        <begin position="200"/>
        <end position="209"/>
    </location>
</feature>
<feature type="compositionally biased region" description="Basic and acidic residues" evidence="3">
    <location>
        <begin position="313"/>
        <end position="337"/>
    </location>
</feature>
<accession>B0YCZ3</accession>
<gene>
    <name type="primary">rrp36</name>
    <name type="ORF">AFUB_093710</name>
</gene>